<organism>
    <name type="scientific">Gallus gallus</name>
    <name type="common">Chicken</name>
    <dbReference type="NCBI Taxonomy" id="9031"/>
    <lineage>
        <taxon>Eukaryota</taxon>
        <taxon>Metazoa</taxon>
        <taxon>Chordata</taxon>
        <taxon>Craniata</taxon>
        <taxon>Vertebrata</taxon>
        <taxon>Euteleostomi</taxon>
        <taxon>Archelosauria</taxon>
        <taxon>Archosauria</taxon>
        <taxon>Dinosauria</taxon>
        <taxon>Saurischia</taxon>
        <taxon>Theropoda</taxon>
        <taxon>Coelurosauria</taxon>
        <taxon>Aves</taxon>
        <taxon>Neognathae</taxon>
        <taxon>Galloanserae</taxon>
        <taxon>Galliformes</taxon>
        <taxon>Phasianidae</taxon>
        <taxon>Phasianinae</taxon>
        <taxon>Gallus</taxon>
    </lineage>
</organism>
<gene>
    <name type="primary">BMP2</name>
    <name type="synonym">BMP-2</name>
</gene>
<comment type="function">
    <text evidence="5">Negatively regulates the structure and function of the limb apical ectodermal ridge.</text>
</comment>
<comment type="subunit">
    <text evidence="2">Homodimer; disulfide-linked.</text>
</comment>
<comment type="subcellular location">
    <subcellularLocation>
        <location evidence="1">Secreted</location>
    </subcellularLocation>
</comment>
<comment type="similarity">
    <text evidence="6">Belongs to the TGF-beta family.</text>
</comment>
<evidence type="ECO:0000250" key="1"/>
<evidence type="ECO:0000250" key="2">
    <source>
        <dbReference type="UniProtKB" id="P12643"/>
    </source>
</evidence>
<evidence type="ECO:0000255" key="3"/>
<evidence type="ECO:0000256" key="4">
    <source>
        <dbReference type="SAM" id="MobiDB-lite"/>
    </source>
</evidence>
<evidence type="ECO:0000269" key="5">
    <source>
    </source>
</evidence>
<evidence type="ECO:0000305" key="6"/>
<reference key="1">
    <citation type="journal article" date="1994" name="Development">
        <title>Bone morphogenetic proteins and a signalling pathway that controls patterning in the developing chick limb.</title>
        <authorList>
            <person name="Francis P.H."/>
            <person name="Richardson M.K."/>
            <person name="Brickell P.M."/>
            <person name="Tickle C."/>
        </authorList>
    </citation>
    <scope>NUCLEOTIDE SEQUENCE [MRNA]</scope>
    <source>
        <strain>White leghorn</strain>
    </source>
</reference>
<reference key="2">
    <citation type="journal article" date="1999" name="Development">
        <title>BMPs negatively regulate structure and function of the limb apical ectodermal ridge.</title>
        <authorList>
            <person name="Pizette S."/>
            <person name="Niswander L."/>
        </authorList>
    </citation>
    <scope>FUNCTION</scope>
</reference>
<keyword id="KW-0891">Chondrogenesis</keyword>
<keyword id="KW-0165">Cleavage on pair of basic residues</keyword>
<keyword id="KW-0202">Cytokine</keyword>
<keyword id="KW-0217">Developmental protein</keyword>
<keyword id="KW-0221">Differentiation</keyword>
<keyword id="KW-1015">Disulfide bond</keyword>
<keyword id="KW-0325">Glycoprotein</keyword>
<keyword id="KW-0339">Growth factor</keyword>
<keyword id="KW-0892">Osteogenesis</keyword>
<keyword id="KW-1185">Reference proteome</keyword>
<keyword id="KW-0964">Secreted</keyword>
<sequence>GSLKRPEDLLGEFELRLLHMFGLKRRPSPGKDVVIPPYMLDLYRLHAGQQLGYPLERAACRANTVCSFHHEEVLEELPETSGKTARRFFFNLTSIPNEESVTSAELQIFPGEQVHEAFESNSSYHHRINIYEIMKPATATSKDPVTRLLDTRLVHHNASKWESSDVTPAVLRWIAHGQPNHGFVVEVVHLDKENSASKRHVRISRSLHQDEDSWSQLRPLLVTFGHDGKGHPLHKREKRQAKHKQRKRHKYSCKRHPLYVDFNDVGWNDWIVAPPGYSAFYCHGECPFPLADHLNSTNHAIVQTLVNSVNSKIPKACCVPTELSAISMLYLDENEKVVLKNYQDMVVEGCGCR</sequence>
<proteinExistence type="evidence at transcript level"/>
<name>BMP2_CHICK</name>
<dbReference type="EMBL" id="X75914">
    <property type="protein sequence ID" value="CAA53513.1"/>
    <property type="molecule type" value="mRNA"/>
</dbReference>
<dbReference type="PIR" id="I50607">
    <property type="entry name" value="I50607"/>
</dbReference>
<dbReference type="SMR" id="Q90751"/>
<dbReference type="FunCoup" id="Q90751">
    <property type="interactions" value="52"/>
</dbReference>
<dbReference type="STRING" id="9031.ENSGALP00000069686"/>
<dbReference type="GlyCosmos" id="Q90751">
    <property type="glycosylation" value="4 sites, No reported glycans"/>
</dbReference>
<dbReference type="GlyGen" id="Q90751">
    <property type="glycosylation" value="5 sites"/>
</dbReference>
<dbReference type="PaxDb" id="9031-ENSGALP00000014334"/>
<dbReference type="VEuPathDB" id="HostDB:geneid_378779"/>
<dbReference type="eggNOG" id="KOG3900">
    <property type="taxonomic scope" value="Eukaryota"/>
</dbReference>
<dbReference type="InParanoid" id="Q90751"/>
<dbReference type="OrthoDB" id="5987191at2759"/>
<dbReference type="PhylomeDB" id="Q90751"/>
<dbReference type="Proteomes" id="UP000000539">
    <property type="component" value="Unassembled WGS sequence"/>
</dbReference>
<dbReference type="GO" id="GO:0005615">
    <property type="term" value="C:extracellular space"/>
    <property type="evidence" value="ECO:0000318"/>
    <property type="project" value="GO_Central"/>
</dbReference>
<dbReference type="GO" id="GO:0005125">
    <property type="term" value="F:cytokine activity"/>
    <property type="evidence" value="ECO:0000318"/>
    <property type="project" value="GO_Central"/>
</dbReference>
<dbReference type="GO" id="GO:0008083">
    <property type="term" value="F:growth factor activity"/>
    <property type="evidence" value="ECO:0007669"/>
    <property type="project" value="UniProtKB-KW"/>
</dbReference>
<dbReference type="GO" id="GO:0060317">
    <property type="term" value="P:cardiac epithelial to mesenchymal transition"/>
    <property type="evidence" value="ECO:0000315"/>
    <property type="project" value="DFLAT"/>
</dbReference>
<dbReference type="GO" id="GO:0051216">
    <property type="term" value="P:cartilage development"/>
    <property type="evidence" value="ECO:0007669"/>
    <property type="project" value="UniProtKB-KW"/>
</dbReference>
<dbReference type="GO" id="GO:0001503">
    <property type="term" value="P:ossification"/>
    <property type="evidence" value="ECO:0007669"/>
    <property type="project" value="UniProtKB-KW"/>
</dbReference>
<dbReference type="GO" id="GO:0010718">
    <property type="term" value="P:positive regulation of epithelial to mesenchymal transition"/>
    <property type="evidence" value="ECO:0000315"/>
    <property type="project" value="DFLAT"/>
</dbReference>
<dbReference type="CDD" id="cd19390">
    <property type="entry name" value="TGF_beta_BMP2"/>
    <property type="match status" value="1"/>
</dbReference>
<dbReference type="FunFam" id="2.10.90.10:FF:000103">
    <property type="entry name" value="Bone morphogenetic protein 16"/>
    <property type="match status" value="1"/>
</dbReference>
<dbReference type="FunFam" id="2.60.120.970:FF:000009">
    <property type="entry name" value="bone morphogenetic protein 2"/>
    <property type="match status" value="1"/>
</dbReference>
<dbReference type="Gene3D" id="2.60.120.970">
    <property type="match status" value="1"/>
</dbReference>
<dbReference type="Gene3D" id="2.10.90.10">
    <property type="entry name" value="Cystine-knot cytokines"/>
    <property type="match status" value="1"/>
</dbReference>
<dbReference type="InterPro" id="IPR047953">
    <property type="entry name" value="BMP2_TGF_beta-like"/>
</dbReference>
<dbReference type="InterPro" id="IPR029034">
    <property type="entry name" value="Cystine-knot_cytokine"/>
</dbReference>
<dbReference type="InterPro" id="IPR001839">
    <property type="entry name" value="TGF-b_C"/>
</dbReference>
<dbReference type="InterPro" id="IPR001111">
    <property type="entry name" value="TGF-b_propeptide"/>
</dbReference>
<dbReference type="InterPro" id="IPR015615">
    <property type="entry name" value="TGF-beta-rel"/>
</dbReference>
<dbReference type="InterPro" id="IPR017948">
    <property type="entry name" value="TGFb_CS"/>
</dbReference>
<dbReference type="PANTHER" id="PTHR11848:SF143">
    <property type="entry name" value="BONE MORPHOGENETIC PROTEIN 2"/>
    <property type="match status" value="1"/>
</dbReference>
<dbReference type="PANTHER" id="PTHR11848">
    <property type="entry name" value="TGF-BETA FAMILY"/>
    <property type="match status" value="1"/>
</dbReference>
<dbReference type="Pfam" id="PF00019">
    <property type="entry name" value="TGF_beta"/>
    <property type="match status" value="1"/>
</dbReference>
<dbReference type="Pfam" id="PF00688">
    <property type="entry name" value="TGFb_propeptide"/>
    <property type="match status" value="1"/>
</dbReference>
<dbReference type="PRINTS" id="PR00669">
    <property type="entry name" value="INHIBINA"/>
</dbReference>
<dbReference type="SMART" id="SM00204">
    <property type="entry name" value="TGFB"/>
    <property type="match status" value="1"/>
</dbReference>
<dbReference type="SUPFAM" id="SSF57501">
    <property type="entry name" value="Cystine-knot cytokines"/>
    <property type="match status" value="1"/>
</dbReference>
<dbReference type="PROSITE" id="PS00250">
    <property type="entry name" value="TGF_BETA_1"/>
    <property type="match status" value="1"/>
</dbReference>
<dbReference type="PROSITE" id="PS51362">
    <property type="entry name" value="TGF_BETA_2"/>
    <property type="match status" value="1"/>
</dbReference>
<accession>Q90751</accession>
<protein>
    <recommendedName>
        <fullName>Bone morphogenetic protein 2</fullName>
        <shortName>BMP-2</shortName>
    </recommendedName>
</protein>
<feature type="propeptide" id="PRO_0000033820" evidence="1">
    <location>
        <begin position="1" status="less than"/>
        <end position="239"/>
    </location>
</feature>
<feature type="chain" id="PRO_0000033821" description="Bone morphogenetic protein 2">
    <location>
        <begin position="240"/>
        <end position="353"/>
    </location>
</feature>
<feature type="region of interest" description="Disordered" evidence="4">
    <location>
        <begin position="228"/>
        <end position="248"/>
    </location>
</feature>
<feature type="compositionally biased region" description="Basic residues" evidence="4">
    <location>
        <begin position="231"/>
        <end position="248"/>
    </location>
</feature>
<feature type="glycosylation site" description="N-linked (GlcNAc...) asparagine" evidence="3">
    <location>
        <position position="91"/>
    </location>
</feature>
<feature type="glycosylation site" description="N-linked (GlcNAc...) asparagine" evidence="3">
    <location>
        <position position="121"/>
    </location>
</feature>
<feature type="glycosylation site" description="N-linked (GlcNAc...) asparagine" evidence="3">
    <location>
        <position position="157"/>
    </location>
</feature>
<feature type="glycosylation site" description="N-linked (GlcNAc...) asparagine" evidence="3">
    <location>
        <position position="295"/>
    </location>
</feature>
<feature type="disulfide bond" evidence="1">
    <location>
        <begin position="253"/>
        <end position="318"/>
    </location>
</feature>
<feature type="disulfide bond" evidence="1">
    <location>
        <begin position="282"/>
        <end position="350"/>
    </location>
</feature>
<feature type="disulfide bond" evidence="1">
    <location>
        <begin position="286"/>
        <end position="352"/>
    </location>
</feature>
<feature type="disulfide bond" description="Interchain" evidence="1">
    <location>
        <position position="317"/>
    </location>
</feature>
<feature type="non-terminal residue">
    <location>
        <position position="1"/>
    </location>
</feature>